<evidence type="ECO:0000250" key="1"/>
<evidence type="ECO:0000250" key="2">
    <source>
        <dbReference type="UniProtKB" id="P54609"/>
    </source>
</evidence>
<evidence type="ECO:0000255" key="3"/>
<evidence type="ECO:0000256" key="4">
    <source>
        <dbReference type="SAM" id="MobiDB-lite"/>
    </source>
</evidence>
<evidence type="ECO:0000269" key="5">
    <source>
    </source>
</evidence>
<evidence type="ECO:0000305" key="6"/>
<evidence type="ECO:0007744" key="7">
    <source>
    </source>
</evidence>
<evidence type="ECO:0007744" key="8">
    <source>
    </source>
</evidence>
<evidence type="ECO:0007744" key="9">
    <source>
    </source>
</evidence>
<sequence length="815" mass="90340">MANQAESSDSKGTKKDFSTAILEKKKAANRLVVDEAINDDNSVVSLHPDTMEKLQLFRGDTILIKGKKRKDTVCIALADETCDEPKIRMNKVVRSNLRVRLGDVISVHQCPDVKYGNRVHILPLDDTIEGVSGNIFDAYLKPYFLEAYRPVRKGDLFLVRGGMRSIEFKVIETDPAEYCVVAPDTEIFCEGEPIKREDEERLDEVGYDDVGGVRKQMAQIRELVELPLRHPQLFKSIGVKPPKGILLYGPPGSGKTLIARAVANETGAFFFCINGPEIMSKLAGESESNLRKAFEEAEKNAPSIIFIDEIDSIAPKREKTHGEVERRIVSQLLTLMDGLKSRAHVIVMGATNRPNSIDPALRRFGRFDREIDIGVPDEIGRLEVLRIHTKNMKLAEDVDLERVSKDTHGYVGADLAALCTEAALQCIREKMDVIDLDDEEIDAEILNSMAVSNDHFQTALGNSNPSALRETVVEVPNVSWEDIGGLENVKRELQETVQYPVEHPEKFEKFGMSPSKGVLFYGPPGCGKTLLAKAIANECQANFISIKGPELLTMWFGESEANVREIFDKARQSAPCVLFFDELDSIATQRGNSVGDAGGAADRVLNQLLTEMDGMNAKKTVFIIGATNRPDIIDPALLRPGRLDQLIYIPLPDEESRYQIFKSCLRKSPVAKDVDLRALAKYTQGFSGADITEICQRSCKYAIRENIEKDIEKERKRAESPEAMEEDEEEIAEIKAGHFEESMKYARRSVSDADIRKYQAFAQTLQQSRGFGSEFRFPDAPTGTTGAFPGAAATVGGVDPFATSGGAADDDDLYS</sequence>
<accession>Q9SCN8</accession>
<accession>Q0WQA2</accession>
<organism>
    <name type="scientific">Arabidopsis thaliana</name>
    <name type="common">Mouse-ear cress</name>
    <dbReference type="NCBI Taxonomy" id="3702"/>
    <lineage>
        <taxon>Eukaryota</taxon>
        <taxon>Viridiplantae</taxon>
        <taxon>Streptophyta</taxon>
        <taxon>Embryophyta</taxon>
        <taxon>Tracheophyta</taxon>
        <taxon>Spermatophyta</taxon>
        <taxon>Magnoliopsida</taxon>
        <taxon>eudicotyledons</taxon>
        <taxon>Gunneridae</taxon>
        <taxon>Pentapetalae</taxon>
        <taxon>rosids</taxon>
        <taxon>malvids</taxon>
        <taxon>Brassicales</taxon>
        <taxon>Brassicaceae</taxon>
        <taxon>Camelineae</taxon>
        <taxon>Arabidopsis</taxon>
    </lineage>
</organism>
<protein>
    <recommendedName>
        <fullName>Cell division control protein 48 homolog D</fullName>
        <shortName>AtCDC48d</shortName>
    </recommendedName>
    <alternativeName>
        <fullName>Transitional endoplasmic reticulum ATPase D</fullName>
    </alternativeName>
</protein>
<name>CD48D_ARATH</name>
<proteinExistence type="evidence at protein level"/>
<comment type="function">
    <text evidence="1">Probably functions in cell division and growth processes. Interacts with certain SNAREs as part of specialized membrane fusion events where vesicles from the same organelle fuse (homotypic fusion) (By similarity).</text>
</comment>
<comment type="subcellular location">
    <subcellularLocation>
        <location evidence="5">Nucleus</location>
    </subcellularLocation>
    <subcellularLocation>
        <location evidence="1">Cytoplasm</location>
        <location evidence="1">Cytoskeleton</location>
        <location evidence="1">Phragmoplast</location>
    </subcellularLocation>
    <text evidence="1">Primarily localized to the nucleus and, during cytokinesis, to the phragmoplast, a site where membrane vesicles are targeted in the deposition of new cell wall materials.</text>
</comment>
<comment type="similarity">
    <text evidence="6">Belongs to the AAA ATPase family.</text>
</comment>
<gene>
    <name type="primary">CDC48D</name>
    <name type="ordered locus">At3g53230</name>
    <name type="ORF">T4D2.160</name>
</gene>
<reference key="1">
    <citation type="journal article" date="2000" name="Nature">
        <title>Sequence and analysis of chromosome 3 of the plant Arabidopsis thaliana.</title>
        <authorList>
            <person name="Salanoubat M."/>
            <person name="Lemcke K."/>
            <person name="Rieger M."/>
            <person name="Ansorge W."/>
            <person name="Unseld M."/>
            <person name="Fartmann B."/>
            <person name="Valle G."/>
            <person name="Bloecker H."/>
            <person name="Perez-Alonso M."/>
            <person name="Obermaier B."/>
            <person name="Delseny M."/>
            <person name="Boutry M."/>
            <person name="Grivell L.A."/>
            <person name="Mache R."/>
            <person name="Puigdomenech P."/>
            <person name="De Simone V."/>
            <person name="Choisne N."/>
            <person name="Artiguenave F."/>
            <person name="Robert C."/>
            <person name="Brottier P."/>
            <person name="Wincker P."/>
            <person name="Cattolico L."/>
            <person name="Weissenbach J."/>
            <person name="Saurin W."/>
            <person name="Quetier F."/>
            <person name="Schaefer M."/>
            <person name="Mueller-Auer S."/>
            <person name="Gabel C."/>
            <person name="Fuchs M."/>
            <person name="Benes V."/>
            <person name="Wurmbach E."/>
            <person name="Drzonek H."/>
            <person name="Erfle H."/>
            <person name="Jordan N."/>
            <person name="Bangert S."/>
            <person name="Wiedelmann R."/>
            <person name="Kranz H."/>
            <person name="Voss H."/>
            <person name="Holland R."/>
            <person name="Brandt P."/>
            <person name="Nyakatura G."/>
            <person name="Vezzi A."/>
            <person name="D'Angelo M."/>
            <person name="Pallavicini A."/>
            <person name="Toppo S."/>
            <person name="Simionati B."/>
            <person name="Conrad A."/>
            <person name="Hornischer K."/>
            <person name="Kauer G."/>
            <person name="Loehnert T.-H."/>
            <person name="Nordsiek G."/>
            <person name="Reichelt J."/>
            <person name="Scharfe M."/>
            <person name="Schoen O."/>
            <person name="Bargues M."/>
            <person name="Terol J."/>
            <person name="Climent J."/>
            <person name="Navarro P."/>
            <person name="Collado C."/>
            <person name="Perez-Perez A."/>
            <person name="Ottenwaelder B."/>
            <person name="Duchemin D."/>
            <person name="Cooke R."/>
            <person name="Laudie M."/>
            <person name="Berger-Llauro C."/>
            <person name="Purnelle B."/>
            <person name="Masuy D."/>
            <person name="de Haan M."/>
            <person name="Maarse A.C."/>
            <person name="Alcaraz J.-P."/>
            <person name="Cottet A."/>
            <person name="Casacuberta E."/>
            <person name="Monfort A."/>
            <person name="Argiriou A."/>
            <person name="Flores M."/>
            <person name="Liguori R."/>
            <person name="Vitale D."/>
            <person name="Mannhaupt G."/>
            <person name="Haase D."/>
            <person name="Schoof H."/>
            <person name="Rudd S."/>
            <person name="Zaccaria P."/>
            <person name="Mewes H.-W."/>
            <person name="Mayer K.F.X."/>
            <person name="Kaul S."/>
            <person name="Town C.D."/>
            <person name="Koo H.L."/>
            <person name="Tallon L.J."/>
            <person name="Jenkins J."/>
            <person name="Rooney T."/>
            <person name="Rizzo M."/>
            <person name="Walts A."/>
            <person name="Utterback T."/>
            <person name="Fujii C.Y."/>
            <person name="Shea T.P."/>
            <person name="Creasy T.H."/>
            <person name="Haas B."/>
            <person name="Maiti R."/>
            <person name="Wu D."/>
            <person name="Peterson J."/>
            <person name="Van Aken S."/>
            <person name="Pai G."/>
            <person name="Militscher J."/>
            <person name="Sellers P."/>
            <person name="Gill J.E."/>
            <person name="Feldblyum T.V."/>
            <person name="Preuss D."/>
            <person name="Lin X."/>
            <person name="Nierman W.C."/>
            <person name="Salzberg S.L."/>
            <person name="White O."/>
            <person name="Venter J.C."/>
            <person name="Fraser C.M."/>
            <person name="Kaneko T."/>
            <person name="Nakamura Y."/>
            <person name="Sato S."/>
            <person name="Kato T."/>
            <person name="Asamizu E."/>
            <person name="Sasamoto S."/>
            <person name="Kimura T."/>
            <person name="Idesawa K."/>
            <person name="Kawashima K."/>
            <person name="Kishida Y."/>
            <person name="Kiyokawa C."/>
            <person name="Kohara M."/>
            <person name="Matsumoto M."/>
            <person name="Matsuno A."/>
            <person name="Muraki A."/>
            <person name="Nakayama S."/>
            <person name="Nakazaki N."/>
            <person name="Shinpo S."/>
            <person name="Takeuchi C."/>
            <person name="Wada T."/>
            <person name="Watanabe A."/>
            <person name="Yamada M."/>
            <person name="Yasuda M."/>
            <person name="Tabata S."/>
        </authorList>
    </citation>
    <scope>NUCLEOTIDE SEQUENCE [LARGE SCALE GENOMIC DNA]</scope>
    <source>
        <strain>cv. Columbia</strain>
    </source>
</reference>
<reference key="2">
    <citation type="journal article" date="2017" name="Plant J.">
        <title>Araport11: a complete reannotation of the Arabidopsis thaliana reference genome.</title>
        <authorList>
            <person name="Cheng C.Y."/>
            <person name="Krishnakumar V."/>
            <person name="Chan A.P."/>
            <person name="Thibaud-Nissen F."/>
            <person name="Schobel S."/>
            <person name="Town C.D."/>
        </authorList>
    </citation>
    <scope>GENOME REANNOTATION</scope>
    <source>
        <strain>cv. Columbia</strain>
    </source>
</reference>
<reference key="3">
    <citation type="submission" date="2006-07" db="EMBL/GenBank/DDBJ databases">
        <title>Large-scale analysis of RIKEN Arabidopsis full-length (RAFL) cDNAs.</title>
        <authorList>
            <person name="Totoki Y."/>
            <person name="Seki M."/>
            <person name="Ishida J."/>
            <person name="Nakajima M."/>
            <person name="Enju A."/>
            <person name="Kamiya A."/>
            <person name="Narusaka M."/>
            <person name="Shin-i T."/>
            <person name="Nakagawa M."/>
            <person name="Sakamoto N."/>
            <person name="Oishi K."/>
            <person name="Kohara Y."/>
            <person name="Kobayashi M."/>
            <person name="Toyoda A."/>
            <person name="Sakaki Y."/>
            <person name="Sakurai T."/>
            <person name="Iida K."/>
            <person name="Akiyama K."/>
            <person name="Satou M."/>
            <person name="Toyoda T."/>
            <person name="Konagaya A."/>
            <person name="Carninci P."/>
            <person name="Kawai J."/>
            <person name="Hayashizaki Y."/>
            <person name="Shinozaki K."/>
        </authorList>
    </citation>
    <scope>NUCLEOTIDE SEQUENCE [LARGE SCALE MRNA]</scope>
    <source>
        <strain>cv. Columbia</strain>
    </source>
</reference>
<reference key="4">
    <citation type="journal article" date="2008" name="J. Proteome Res.">
        <title>Site-specific phosphorylation profiling of Arabidopsis proteins by mass spectrometry and peptide chip analysis.</title>
        <authorList>
            <person name="de la Fuente van Bentem S."/>
            <person name="Anrather D."/>
            <person name="Dohnal I."/>
            <person name="Roitinger E."/>
            <person name="Csaszar E."/>
            <person name="Joore J."/>
            <person name="Buijnink J."/>
            <person name="Carreri A."/>
            <person name="Forzani C."/>
            <person name="Lorkovic Z.J."/>
            <person name="Barta A."/>
            <person name="Lecourieux D."/>
            <person name="Verhounig A."/>
            <person name="Jonak C."/>
            <person name="Hirt H."/>
        </authorList>
    </citation>
    <scope>PHOSPHORYLATION [LARGE SCALE ANALYSIS] AT SER-720</scope>
    <scope>IDENTIFICATION BY MASS SPECTROMETRY [LARGE SCALE ANALYSIS]</scope>
    <source>
        <tissue>Root</tissue>
    </source>
</reference>
<reference key="5">
    <citation type="journal article" date="2009" name="J. Proteomics">
        <title>Phosphoproteomic analysis of nuclei-enriched fractions from Arabidopsis thaliana.</title>
        <authorList>
            <person name="Jones A.M.E."/>
            <person name="MacLean D."/>
            <person name="Studholme D.J."/>
            <person name="Serna-Sanz A."/>
            <person name="Andreasson E."/>
            <person name="Rathjen J.P."/>
            <person name="Peck S.C."/>
        </authorList>
    </citation>
    <scope>SUBCELLULAR LOCATION</scope>
    <scope>PHOSPHORYLATION [LARGE SCALE ANALYSIS] AT SER-720</scope>
    <scope>IDENTIFICATION BY MASS SPECTROMETRY [LARGE SCALE ANALYSIS]</scope>
    <source>
        <strain>cv. Columbia</strain>
    </source>
</reference>
<reference key="6">
    <citation type="journal article" date="2012" name="Mol. Cell. Proteomics">
        <title>Comparative large-scale characterisation of plant vs. mammal proteins reveals similar and idiosyncratic N-alpha acetylation features.</title>
        <authorList>
            <person name="Bienvenut W.V."/>
            <person name="Sumpton D."/>
            <person name="Martinez A."/>
            <person name="Lilla S."/>
            <person name="Espagne C."/>
            <person name="Meinnel T."/>
            <person name="Giglione C."/>
        </authorList>
    </citation>
    <scope>ACETYLATION [LARGE SCALE ANALYSIS] AT ALA-2</scope>
    <scope>CLEAVAGE OF INITIATOR METHIONINE [LARGE SCALE ANALYSIS]</scope>
    <scope>IDENTIFICATION BY MASS SPECTROMETRY [LARGE SCALE ANALYSIS]</scope>
</reference>
<feature type="initiator methionine" description="Removed" evidence="9">
    <location>
        <position position="1"/>
    </location>
</feature>
<feature type="chain" id="PRO_0000084582" description="Cell division control protein 48 homolog D">
    <location>
        <begin position="2"/>
        <end position="815"/>
    </location>
</feature>
<feature type="region of interest" description="Disordered" evidence="4">
    <location>
        <begin position="772"/>
        <end position="815"/>
    </location>
</feature>
<feature type="compositionally biased region" description="Low complexity" evidence="4">
    <location>
        <begin position="780"/>
        <end position="798"/>
    </location>
</feature>
<feature type="binding site" evidence="3">
    <location>
        <begin position="249"/>
        <end position="256"/>
    </location>
    <ligand>
        <name>ATP</name>
        <dbReference type="ChEBI" id="CHEBI:30616"/>
    </ligand>
</feature>
<feature type="binding site" evidence="3">
    <location>
        <begin position="522"/>
        <end position="529"/>
    </location>
    <ligand>
        <name>ATP</name>
        <dbReference type="ChEBI" id="CHEBI:30616"/>
    </ligand>
</feature>
<feature type="modified residue" description="N-acetylalanine" evidence="9">
    <location>
        <position position="2"/>
    </location>
</feature>
<feature type="modified residue" description="Phosphoserine" evidence="2">
    <location>
        <position position="42"/>
    </location>
</feature>
<feature type="modified residue" description="Phosphoserine" evidence="7 8">
    <location>
        <position position="720"/>
    </location>
</feature>
<keyword id="KW-0007">Acetylation</keyword>
<keyword id="KW-0067">ATP-binding</keyword>
<keyword id="KW-0131">Cell cycle</keyword>
<keyword id="KW-0132">Cell division</keyword>
<keyword id="KW-0963">Cytoplasm</keyword>
<keyword id="KW-0206">Cytoskeleton</keyword>
<keyword id="KW-0547">Nucleotide-binding</keyword>
<keyword id="KW-0539">Nucleus</keyword>
<keyword id="KW-0597">Phosphoprotein</keyword>
<keyword id="KW-0653">Protein transport</keyword>
<keyword id="KW-1185">Reference proteome</keyword>
<keyword id="KW-0677">Repeat</keyword>
<keyword id="KW-0813">Transport</keyword>
<dbReference type="EMBL" id="AL132958">
    <property type="protein sequence ID" value="CAB64226.1"/>
    <property type="molecule type" value="Genomic_DNA"/>
</dbReference>
<dbReference type="EMBL" id="CP002686">
    <property type="protein sequence ID" value="AEE79050.1"/>
    <property type="molecule type" value="Genomic_DNA"/>
</dbReference>
<dbReference type="EMBL" id="AK228801">
    <property type="protein sequence ID" value="BAF00697.1"/>
    <property type="molecule type" value="mRNA"/>
</dbReference>
<dbReference type="PIR" id="T46169">
    <property type="entry name" value="T46169"/>
</dbReference>
<dbReference type="SMR" id="Q9SCN8"/>
<dbReference type="BioGRID" id="9806">
    <property type="interactions" value="66"/>
</dbReference>
<dbReference type="FunCoup" id="Q9SCN8">
    <property type="interactions" value="3178"/>
</dbReference>
<dbReference type="STRING" id="3702.Q9SCN8"/>
<dbReference type="iPTMnet" id="Q9SCN8"/>
<dbReference type="PaxDb" id="3702-AT3G53230.1"/>
<dbReference type="ProteomicsDB" id="223921"/>
<dbReference type="EnsemblPlants" id="AT3G53230.1">
    <property type="protein sequence ID" value="AT3G53230.1"/>
    <property type="gene ID" value="AT3G53230"/>
</dbReference>
<dbReference type="Gramene" id="AT3G53230.1">
    <property type="protein sequence ID" value="AT3G53230.1"/>
    <property type="gene ID" value="AT3G53230"/>
</dbReference>
<dbReference type="KEGG" id="ath:AT3G53230"/>
<dbReference type="Araport" id="AT3G53230"/>
<dbReference type="TAIR" id="AT3G53230">
    <property type="gene designation" value="ATCDC48B"/>
</dbReference>
<dbReference type="eggNOG" id="KOG0730">
    <property type="taxonomic scope" value="Eukaryota"/>
</dbReference>
<dbReference type="HOGENOM" id="CLU_000688_12_0_1"/>
<dbReference type="InParanoid" id="Q9SCN8"/>
<dbReference type="OMA" id="MLPDDTC"/>
<dbReference type="OrthoDB" id="27435at2759"/>
<dbReference type="PhylomeDB" id="Q9SCN8"/>
<dbReference type="CD-CODE" id="4299E36E">
    <property type="entry name" value="Nucleolus"/>
</dbReference>
<dbReference type="PRO" id="PR:Q9SCN8"/>
<dbReference type="Proteomes" id="UP000006548">
    <property type="component" value="Chromosome 3"/>
</dbReference>
<dbReference type="ExpressionAtlas" id="Q9SCN8">
    <property type="expression patterns" value="baseline and differential"/>
</dbReference>
<dbReference type="GO" id="GO:0005856">
    <property type="term" value="C:cytoskeleton"/>
    <property type="evidence" value="ECO:0007669"/>
    <property type="project" value="UniProtKB-KW"/>
</dbReference>
<dbReference type="GO" id="GO:0005829">
    <property type="term" value="C:cytosol"/>
    <property type="evidence" value="ECO:0000314"/>
    <property type="project" value="TAIR"/>
</dbReference>
<dbReference type="GO" id="GO:0005794">
    <property type="term" value="C:Golgi apparatus"/>
    <property type="evidence" value="ECO:0007005"/>
    <property type="project" value="TAIR"/>
</dbReference>
<dbReference type="GO" id="GO:0005730">
    <property type="term" value="C:nucleolus"/>
    <property type="evidence" value="ECO:0007005"/>
    <property type="project" value="TAIR"/>
</dbReference>
<dbReference type="GO" id="GO:0005654">
    <property type="term" value="C:nucleoplasm"/>
    <property type="evidence" value="ECO:0000314"/>
    <property type="project" value="TAIR"/>
</dbReference>
<dbReference type="GO" id="GO:0009524">
    <property type="term" value="C:phragmoplast"/>
    <property type="evidence" value="ECO:0007669"/>
    <property type="project" value="UniProtKB-SubCell"/>
</dbReference>
<dbReference type="GO" id="GO:0005524">
    <property type="term" value="F:ATP binding"/>
    <property type="evidence" value="ECO:0007669"/>
    <property type="project" value="UniProtKB-KW"/>
</dbReference>
<dbReference type="GO" id="GO:0016887">
    <property type="term" value="F:ATP hydrolysis activity"/>
    <property type="evidence" value="ECO:0007669"/>
    <property type="project" value="InterPro"/>
</dbReference>
<dbReference type="GO" id="GO:0051301">
    <property type="term" value="P:cell division"/>
    <property type="evidence" value="ECO:0007669"/>
    <property type="project" value="UniProtKB-KW"/>
</dbReference>
<dbReference type="GO" id="GO:0045732">
    <property type="term" value="P:positive regulation of protein catabolic process"/>
    <property type="evidence" value="ECO:0000314"/>
    <property type="project" value="TAIR"/>
</dbReference>
<dbReference type="GO" id="GO:0015031">
    <property type="term" value="P:protein transport"/>
    <property type="evidence" value="ECO:0007669"/>
    <property type="project" value="UniProtKB-KW"/>
</dbReference>
<dbReference type="CDD" id="cd19519">
    <property type="entry name" value="RecA-like_CDC48_r1-like"/>
    <property type="match status" value="1"/>
</dbReference>
<dbReference type="CDD" id="cd19528">
    <property type="entry name" value="RecA-like_CDC48_r2-like"/>
    <property type="match status" value="1"/>
</dbReference>
<dbReference type="FunFam" id="1.10.8.60:FF:000004">
    <property type="entry name" value="Cell division control 48"/>
    <property type="match status" value="1"/>
</dbReference>
<dbReference type="FunFam" id="3.10.330.10:FF:000001">
    <property type="entry name" value="Cell division control 48"/>
    <property type="match status" value="1"/>
</dbReference>
<dbReference type="FunFam" id="2.40.40.20:FF:000003">
    <property type="entry name" value="Transitional endoplasmic reticulum ATPase"/>
    <property type="match status" value="1"/>
</dbReference>
<dbReference type="FunFam" id="3.40.50.300:FF:000012">
    <property type="entry name" value="Transitional endoplasmic reticulum ATPase"/>
    <property type="match status" value="1"/>
</dbReference>
<dbReference type="FunFam" id="3.40.50.300:FF:000048">
    <property type="entry name" value="Transitional endoplasmic reticulum ATPase"/>
    <property type="match status" value="1"/>
</dbReference>
<dbReference type="Gene3D" id="1.10.8.60">
    <property type="match status" value="1"/>
</dbReference>
<dbReference type="Gene3D" id="2.40.40.20">
    <property type="match status" value="1"/>
</dbReference>
<dbReference type="Gene3D" id="3.10.330.10">
    <property type="match status" value="1"/>
</dbReference>
<dbReference type="Gene3D" id="6.10.20.150">
    <property type="match status" value="1"/>
</dbReference>
<dbReference type="Gene3D" id="3.40.50.300">
    <property type="entry name" value="P-loop containing nucleotide triphosphate hydrolases"/>
    <property type="match status" value="2"/>
</dbReference>
<dbReference type="InterPro" id="IPR003593">
    <property type="entry name" value="AAA+_ATPase"/>
</dbReference>
<dbReference type="InterPro" id="IPR005938">
    <property type="entry name" value="AAA_ATPase_CDC48"/>
</dbReference>
<dbReference type="InterPro" id="IPR050168">
    <property type="entry name" value="AAA_ATPase_domain"/>
</dbReference>
<dbReference type="InterPro" id="IPR041569">
    <property type="entry name" value="AAA_lid_3"/>
</dbReference>
<dbReference type="InterPro" id="IPR009010">
    <property type="entry name" value="Asp_de-COase-like_dom_sf"/>
</dbReference>
<dbReference type="InterPro" id="IPR003959">
    <property type="entry name" value="ATPase_AAA_core"/>
</dbReference>
<dbReference type="InterPro" id="IPR003960">
    <property type="entry name" value="ATPase_AAA_CS"/>
</dbReference>
<dbReference type="InterPro" id="IPR004201">
    <property type="entry name" value="Cdc48_dom2"/>
</dbReference>
<dbReference type="InterPro" id="IPR029067">
    <property type="entry name" value="CDC48_domain_2-like_sf"/>
</dbReference>
<dbReference type="InterPro" id="IPR003338">
    <property type="entry name" value="CDC4_N-term_subdom"/>
</dbReference>
<dbReference type="InterPro" id="IPR027417">
    <property type="entry name" value="P-loop_NTPase"/>
</dbReference>
<dbReference type="NCBIfam" id="TIGR01243">
    <property type="entry name" value="CDC48"/>
    <property type="match status" value="1"/>
</dbReference>
<dbReference type="PANTHER" id="PTHR23077">
    <property type="entry name" value="AAA-FAMILY ATPASE"/>
    <property type="match status" value="1"/>
</dbReference>
<dbReference type="PANTHER" id="PTHR23077:SF180">
    <property type="entry name" value="CELL DIVISION CONTROL PROTEIN 48 HOMOLOG D"/>
    <property type="match status" value="1"/>
</dbReference>
<dbReference type="Pfam" id="PF00004">
    <property type="entry name" value="AAA"/>
    <property type="match status" value="2"/>
</dbReference>
<dbReference type="Pfam" id="PF17862">
    <property type="entry name" value="AAA_lid_3"/>
    <property type="match status" value="2"/>
</dbReference>
<dbReference type="Pfam" id="PF02933">
    <property type="entry name" value="CDC48_2"/>
    <property type="match status" value="1"/>
</dbReference>
<dbReference type="Pfam" id="PF02359">
    <property type="entry name" value="CDC48_N"/>
    <property type="match status" value="1"/>
</dbReference>
<dbReference type="SMART" id="SM00382">
    <property type="entry name" value="AAA"/>
    <property type="match status" value="2"/>
</dbReference>
<dbReference type="SMART" id="SM01072">
    <property type="entry name" value="CDC48_2"/>
    <property type="match status" value="1"/>
</dbReference>
<dbReference type="SMART" id="SM01073">
    <property type="entry name" value="CDC48_N"/>
    <property type="match status" value="1"/>
</dbReference>
<dbReference type="SUPFAM" id="SSF50692">
    <property type="entry name" value="ADC-like"/>
    <property type="match status" value="1"/>
</dbReference>
<dbReference type="SUPFAM" id="SSF54585">
    <property type="entry name" value="Cdc48 domain 2-like"/>
    <property type="match status" value="1"/>
</dbReference>
<dbReference type="SUPFAM" id="SSF52540">
    <property type="entry name" value="P-loop containing nucleoside triphosphate hydrolases"/>
    <property type="match status" value="2"/>
</dbReference>
<dbReference type="PROSITE" id="PS00674">
    <property type="entry name" value="AAA"/>
    <property type="match status" value="2"/>
</dbReference>